<feature type="chain" id="PRO_0000171139" description="6-phosphogluconolactonase">
    <location>
        <begin position="1"/>
        <end position="331"/>
    </location>
</feature>
<organism>
    <name type="scientific">Salmonella typhimurium (strain LT2 / SGSC1412 / ATCC 700720)</name>
    <dbReference type="NCBI Taxonomy" id="99287"/>
    <lineage>
        <taxon>Bacteria</taxon>
        <taxon>Pseudomonadati</taxon>
        <taxon>Pseudomonadota</taxon>
        <taxon>Gammaproteobacteria</taxon>
        <taxon>Enterobacterales</taxon>
        <taxon>Enterobacteriaceae</taxon>
        <taxon>Salmonella</taxon>
    </lineage>
</organism>
<reference key="1">
    <citation type="journal article" date="2001" name="Nature">
        <title>Complete genome sequence of Salmonella enterica serovar Typhimurium LT2.</title>
        <authorList>
            <person name="McClelland M."/>
            <person name="Sanderson K.E."/>
            <person name="Spieth J."/>
            <person name="Clifton S.W."/>
            <person name="Latreille P."/>
            <person name="Courtney L."/>
            <person name="Porwollik S."/>
            <person name="Ali J."/>
            <person name="Dante M."/>
            <person name="Du F."/>
            <person name="Hou S."/>
            <person name="Layman D."/>
            <person name="Leonard S."/>
            <person name="Nguyen C."/>
            <person name="Scott K."/>
            <person name="Holmes A."/>
            <person name="Grewal N."/>
            <person name="Mulvaney E."/>
            <person name="Ryan E."/>
            <person name="Sun H."/>
            <person name="Florea L."/>
            <person name="Miller W."/>
            <person name="Stoneking T."/>
            <person name="Nhan M."/>
            <person name="Waterston R."/>
            <person name="Wilson R.K."/>
        </authorList>
    </citation>
    <scope>NUCLEOTIDE SEQUENCE [LARGE SCALE GENOMIC DNA]</scope>
    <source>
        <strain>LT2 / SGSC1412 / ATCC 700720</strain>
    </source>
</reference>
<name>6PGL_SALTY</name>
<sequence>MKQTVYTASPESQQIHVWSLNHEGTLTLVQVVDVPGQVQPMVVSPDKRYLYVGVRPEFRVLAYRIAPDDGALTFAAESALPGSPTHISTDHHGRFVFVGSYNAGNVSVTRLQDGLPVELVDVVEGLDGCHSANITPDNRTLWVPALKQDRICLFTLSDDGHLVAQEPAEVNTVEGAGPRHMVFHPNRQYAYCVNELNSSVDVWQLKNPHGEIECVQTLDMMPADFSDTRWAADIHITPDGRHLYACDRTASLITVFSVSEDGSVLSVEGFQPTEAQPRGFNIDNSGKYLIAAGQKSHHIAVYEITGTQGLLTEKGRYAVGQGPMWVVVNAY</sequence>
<comment type="function">
    <text evidence="1">Catalyzes the hydrolysis of 6-phosphogluconolactone to 6-phosphogluconate.</text>
</comment>
<comment type="catalytic activity">
    <reaction evidence="1">
        <text>6-phospho-D-glucono-1,5-lactone + H2O = 6-phospho-D-gluconate + H(+)</text>
        <dbReference type="Rhea" id="RHEA:12556"/>
        <dbReference type="ChEBI" id="CHEBI:15377"/>
        <dbReference type="ChEBI" id="CHEBI:15378"/>
        <dbReference type="ChEBI" id="CHEBI:57955"/>
        <dbReference type="ChEBI" id="CHEBI:58759"/>
        <dbReference type="EC" id="3.1.1.31"/>
    </reaction>
</comment>
<comment type="pathway">
    <text evidence="1">Carbohydrate degradation; pentose phosphate pathway; D-ribulose 5-phosphate from D-glucose 6-phosphate (oxidative stage): step 2/3.</text>
</comment>
<comment type="similarity">
    <text evidence="1">Belongs to the cycloisomerase 2 family.</text>
</comment>
<protein>
    <recommendedName>
        <fullName evidence="1">6-phosphogluconolactonase</fullName>
        <shortName evidence="1">6-P-gluconolactonase</shortName>
        <ecNumber evidence="1">3.1.1.31</ecNumber>
    </recommendedName>
</protein>
<keyword id="KW-0119">Carbohydrate metabolism</keyword>
<keyword id="KW-0313">Glucose metabolism</keyword>
<keyword id="KW-0378">Hydrolase</keyword>
<keyword id="KW-1185">Reference proteome</keyword>
<accession>Q8ZQR4</accession>
<proteinExistence type="inferred from homology"/>
<evidence type="ECO:0000255" key="1">
    <source>
        <dbReference type="HAMAP-Rule" id="MF_01605"/>
    </source>
</evidence>
<dbReference type="EC" id="3.1.1.31" evidence="1"/>
<dbReference type="EMBL" id="AE006468">
    <property type="protein sequence ID" value="AAL19723.1"/>
    <property type="molecule type" value="Genomic_DNA"/>
</dbReference>
<dbReference type="RefSeq" id="WP_000815468.1">
    <property type="nucleotide sequence ID" value="NC_003197.2"/>
</dbReference>
<dbReference type="SMR" id="Q8ZQR4"/>
<dbReference type="STRING" id="99287.STM0785"/>
<dbReference type="PaxDb" id="99287-STM0785"/>
<dbReference type="KEGG" id="stm:STM0785"/>
<dbReference type="PATRIC" id="fig|99287.12.peg.818"/>
<dbReference type="HOGENOM" id="CLU_038716_2_0_6"/>
<dbReference type="OMA" id="NKEFIGY"/>
<dbReference type="PhylomeDB" id="Q8ZQR4"/>
<dbReference type="BioCyc" id="SENT99287:STM0785-MONOMER"/>
<dbReference type="UniPathway" id="UPA00115">
    <property type="reaction ID" value="UER00409"/>
</dbReference>
<dbReference type="Proteomes" id="UP000001014">
    <property type="component" value="Chromosome"/>
</dbReference>
<dbReference type="GO" id="GO:0005829">
    <property type="term" value="C:cytosol"/>
    <property type="evidence" value="ECO:0000318"/>
    <property type="project" value="GO_Central"/>
</dbReference>
<dbReference type="GO" id="GO:0017057">
    <property type="term" value="F:6-phosphogluconolactonase activity"/>
    <property type="evidence" value="ECO:0000318"/>
    <property type="project" value="GO_Central"/>
</dbReference>
<dbReference type="GO" id="GO:0006006">
    <property type="term" value="P:glucose metabolic process"/>
    <property type="evidence" value="ECO:0007669"/>
    <property type="project" value="UniProtKB-KW"/>
</dbReference>
<dbReference type="GO" id="GO:0009051">
    <property type="term" value="P:pentose-phosphate shunt, oxidative branch"/>
    <property type="evidence" value="ECO:0007669"/>
    <property type="project" value="UniProtKB-UniRule"/>
</dbReference>
<dbReference type="FunFam" id="2.130.10.10:FF:000051">
    <property type="entry name" value="6-phosphogluconolactonase"/>
    <property type="match status" value="1"/>
</dbReference>
<dbReference type="Gene3D" id="2.130.10.10">
    <property type="entry name" value="YVTN repeat-like/Quinoprotein amine dehydrogenase"/>
    <property type="match status" value="1"/>
</dbReference>
<dbReference type="HAMAP" id="MF_01605">
    <property type="entry name" value="6P_gluconolactonase"/>
    <property type="match status" value="1"/>
</dbReference>
<dbReference type="InterPro" id="IPR022528">
    <property type="entry name" value="6-phosphogluconolactonase_YbhE"/>
</dbReference>
<dbReference type="InterPro" id="IPR050282">
    <property type="entry name" value="Cycloisomerase_2"/>
</dbReference>
<dbReference type="InterPro" id="IPR019405">
    <property type="entry name" value="Lactonase_7-beta_prop"/>
</dbReference>
<dbReference type="InterPro" id="IPR011045">
    <property type="entry name" value="N2O_reductase_N"/>
</dbReference>
<dbReference type="InterPro" id="IPR015943">
    <property type="entry name" value="WD40/YVTN_repeat-like_dom_sf"/>
</dbReference>
<dbReference type="NCBIfam" id="NF008258">
    <property type="entry name" value="PRK11028.1"/>
    <property type="match status" value="1"/>
</dbReference>
<dbReference type="PANTHER" id="PTHR30344:SF1">
    <property type="entry name" value="6-PHOSPHOGLUCONOLACTONASE"/>
    <property type="match status" value="1"/>
</dbReference>
<dbReference type="PANTHER" id="PTHR30344">
    <property type="entry name" value="6-PHOSPHOGLUCONOLACTONASE-RELATED"/>
    <property type="match status" value="1"/>
</dbReference>
<dbReference type="Pfam" id="PF10282">
    <property type="entry name" value="Lactonase"/>
    <property type="match status" value="1"/>
</dbReference>
<dbReference type="SUPFAM" id="SSF50974">
    <property type="entry name" value="Nitrous oxide reductase, N-terminal domain"/>
    <property type="match status" value="2"/>
</dbReference>
<gene>
    <name evidence="1" type="primary">pgl</name>
    <name type="ordered locus">STM0785</name>
</gene>